<evidence type="ECO:0000255" key="1">
    <source>
        <dbReference type="HAMAP-Rule" id="MF_01665"/>
    </source>
</evidence>
<keyword id="KW-1003">Cell membrane</keyword>
<keyword id="KW-0350">Heme biosynthesis</keyword>
<keyword id="KW-0408">Iron</keyword>
<keyword id="KW-0472">Membrane</keyword>
<keyword id="KW-0479">Metal-binding</keyword>
<keyword id="KW-0560">Oxidoreductase</keyword>
<keyword id="KW-0812">Transmembrane</keyword>
<keyword id="KW-1133">Transmembrane helix</keyword>
<organism>
    <name type="scientific">Brucella abortus biovar 1 (strain 9-941)</name>
    <dbReference type="NCBI Taxonomy" id="262698"/>
    <lineage>
        <taxon>Bacteria</taxon>
        <taxon>Pseudomonadati</taxon>
        <taxon>Pseudomonadota</taxon>
        <taxon>Alphaproteobacteria</taxon>
        <taxon>Hyphomicrobiales</taxon>
        <taxon>Brucellaceae</taxon>
        <taxon>Brucella/Ochrobactrum group</taxon>
        <taxon>Brucella</taxon>
    </lineage>
</organism>
<feature type="chain" id="PRO_0000349020" description="Heme A synthase">
    <location>
        <begin position="1"/>
        <end position="358"/>
    </location>
</feature>
<feature type="transmembrane region" description="Helical" evidence="1">
    <location>
        <begin position="25"/>
        <end position="45"/>
    </location>
</feature>
<feature type="transmembrane region" description="Helical" evidence="1">
    <location>
        <begin position="111"/>
        <end position="131"/>
    </location>
</feature>
<feature type="transmembrane region" description="Helical" evidence="1">
    <location>
        <begin position="141"/>
        <end position="161"/>
    </location>
</feature>
<feature type="transmembrane region" description="Helical" evidence="1">
    <location>
        <begin position="176"/>
        <end position="196"/>
    </location>
</feature>
<feature type="transmembrane region" description="Helical" evidence="1">
    <location>
        <begin position="210"/>
        <end position="230"/>
    </location>
</feature>
<feature type="transmembrane region" description="Helical" evidence="1">
    <location>
        <begin position="269"/>
        <end position="289"/>
    </location>
</feature>
<feature type="transmembrane region" description="Helical" evidence="1">
    <location>
        <begin position="304"/>
        <end position="324"/>
    </location>
</feature>
<feature type="transmembrane region" description="Helical" evidence="1">
    <location>
        <begin position="326"/>
        <end position="346"/>
    </location>
</feature>
<feature type="binding site" description="axial binding residue" evidence="1">
    <location>
        <position position="273"/>
    </location>
    <ligand>
        <name>heme</name>
        <dbReference type="ChEBI" id="CHEBI:30413"/>
    </ligand>
    <ligandPart>
        <name>Fe</name>
        <dbReference type="ChEBI" id="CHEBI:18248"/>
    </ligandPart>
</feature>
<feature type="binding site" description="axial binding residue" evidence="1">
    <location>
        <position position="334"/>
    </location>
    <ligand>
        <name>heme</name>
        <dbReference type="ChEBI" id="CHEBI:30413"/>
    </ligand>
    <ligandPart>
        <name>Fe</name>
        <dbReference type="ChEBI" id="CHEBI:18248"/>
    </ligandPart>
</feature>
<reference key="1">
    <citation type="journal article" date="2005" name="J. Bacteriol.">
        <title>Completion of the genome sequence of Brucella abortus and comparison to the highly similar genomes of Brucella melitensis and Brucella suis.</title>
        <authorList>
            <person name="Halling S.M."/>
            <person name="Peterson-Burch B.D."/>
            <person name="Bricker B.J."/>
            <person name="Zuerner R.L."/>
            <person name="Qing Z."/>
            <person name="Li L.-L."/>
            <person name="Kapur V."/>
            <person name="Alt D.P."/>
            <person name="Olsen S.C."/>
        </authorList>
    </citation>
    <scope>NUCLEOTIDE SEQUENCE [LARGE SCALE GENOMIC DNA]</scope>
    <source>
        <strain>9-941</strain>
    </source>
</reference>
<gene>
    <name evidence="1" type="primary">ctaA</name>
    <name type="ordered locus">BruAb1_0801</name>
</gene>
<protein>
    <recommendedName>
        <fullName evidence="1">Heme A synthase</fullName>
        <shortName evidence="1">HAS</shortName>
        <ecNumber evidence="1">1.17.99.9</ecNumber>
    </recommendedName>
    <alternativeName>
        <fullName evidence="1">Cytochrome aa3-controlling protein</fullName>
    </alternativeName>
</protein>
<dbReference type="EC" id="1.17.99.9" evidence="1"/>
<dbReference type="EMBL" id="AE017223">
    <property type="protein sequence ID" value="AAX74169.1"/>
    <property type="molecule type" value="Genomic_DNA"/>
</dbReference>
<dbReference type="RefSeq" id="WP_002969419.1">
    <property type="nucleotide sequence ID" value="NC_006932.1"/>
</dbReference>
<dbReference type="SMR" id="Q57DW5"/>
<dbReference type="EnsemblBacteria" id="AAX74169">
    <property type="protein sequence ID" value="AAX74169"/>
    <property type="gene ID" value="BruAb1_0801"/>
</dbReference>
<dbReference type="KEGG" id="bmb:BruAb1_0801"/>
<dbReference type="HOGENOM" id="CLU_017627_0_0_5"/>
<dbReference type="UniPathway" id="UPA00269">
    <property type="reaction ID" value="UER00713"/>
</dbReference>
<dbReference type="Proteomes" id="UP000000540">
    <property type="component" value="Chromosome I"/>
</dbReference>
<dbReference type="GO" id="GO:0005886">
    <property type="term" value="C:plasma membrane"/>
    <property type="evidence" value="ECO:0007669"/>
    <property type="project" value="UniProtKB-SubCell"/>
</dbReference>
<dbReference type="GO" id="GO:0046872">
    <property type="term" value="F:metal ion binding"/>
    <property type="evidence" value="ECO:0007669"/>
    <property type="project" value="UniProtKB-KW"/>
</dbReference>
<dbReference type="GO" id="GO:0016653">
    <property type="term" value="F:oxidoreductase activity, acting on NAD(P)H, heme protein as acceptor"/>
    <property type="evidence" value="ECO:0007669"/>
    <property type="project" value="InterPro"/>
</dbReference>
<dbReference type="GO" id="GO:0006784">
    <property type="term" value="P:heme A biosynthetic process"/>
    <property type="evidence" value="ECO:0007669"/>
    <property type="project" value="UniProtKB-UniRule"/>
</dbReference>
<dbReference type="HAMAP" id="MF_01665">
    <property type="entry name" value="HemeA_synth_type2"/>
    <property type="match status" value="1"/>
</dbReference>
<dbReference type="InterPro" id="IPR003780">
    <property type="entry name" value="COX15/CtaA_fam"/>
</dbReference>
<dbReference type="InterPro" id="IPR023754">
    <property type="entry name" value="HemeA_Synthase_type2"/>
</dbReference>
<dbReference type="PANTHER" id="PTHR23289">
    <property type="entry name" value="CYTOCHROME C OXIDASE ASSEMBLY PROTEIN COX15"/>
    <property type="match status" value="1"/>
</dbReference>
<dbReference type="PANTHER" id="PTHR23289:SF2">
    <property type="entry name" value="CYTOCHROME C OXIDASE ASSEMBLY PROTEIN COX15 HOMOLOG"/>
    <property type="match status" value="1"/>
</dbReference>
<dbReference type="Pfam" id="PF02628">
    <property type="entry name" value="COX15-CtaA"/>
    <property type="match status" value="1"/>
</dbReference>
<sequence>MAATSAQHIGLQGHGTSRNDRDRRLVRYWLYAVFAVLIAIVMVGGATRMTGSGLSITEWKPIHGVIPPLNHAEWVEEFEKYQQIPQYQQINKGMSLAEFQYIFWWEWAHRLLARFVGFLVAVPLGFFWLTGRLKGGLKYRMLGLLALGGLQGAIGWWMVASGLSELTSVSQYRLAIHLTTACVIITAVFYIARGLVTYSERPAERSIQRFAGWIVFAVLVQIYLGGLVAGLHAGLTYNTWPLMDGAIIPSDLFTQAPWWRNLFENPKTVQFVHRMFAYTVLLLAILHAVQVWKNAPGTTHARRTIVLVGLVFIQAMIGIATLLMSAPLHLGLTHQFFALVVLAFAVAHWRATKGAYAA</sequence>
<name>CTAA_BRUAB</name>
<accession>Q57DW5</accession>
<comment type="function">
    <text evidence="1">Catalyzes the conversion of heme O to heme A by two successive hydroxylations of the methyl group at C8. The first hydroxylation forms heme I, the second hydroxylation results in an unstable dihydroxymethyl group, which spontaneously dehydrates, resulting in the formyl group of heme A.</text>
</comment>
<comment type="catalytic activity">
    <reaction evidence="1">
        <text>Fe(II)-heme o + 2 A + H2O = Fe(II)-heme a + 2 AH2</text>
        <dbReference type="Rhea" id="RHEA:63388"/>
        <dbReference type="ChEBI" id="CHEBI:13193"/>
        <dbReference type="ChEBI" id="CHEBI:15377"/>
        <dbReference type="ChEBI" id="CHEBI:17499"/>
        <dbReference type="ChEBI" id="CHEBI:60530"/>
        <dbReference type="ChEBI" id="CHEBI:61715"/>
        <dbReference type="EC" id="1.17.99.9"/>
    </reaction>
    <physiologicalReaction direction="left-to-right" evidence="1">
        <dbReference type="Rhea" id="RHEA:63389"/>
    </physiologicalReaction>
</comment>
<comment type="cofactor">
    <cofactor evidence="1">
        <name>heme b</name>
        <dbReference type="ChEBI" id="CHEBI:60344"/>
    </cofactor>
</comment>
<comment type="pathway">
    <text evidence="1">Porphyrin-containing compound metabolism; heme A biosynthesis; heme A from heme O: step 1/1.</text>
</comment>
<comment type="subunit">
    <text evidence="1">Interacts with CtaB.</text>
</comment>
<comment type="subcellular location">
    <subcellularLocation>
        <location evidence="1">Cell membrane</location>
        <topology evidence="1">Multi-pass membrane protein</topology>
    </subcellularLocation>
</comment>
<comment type="similarity">
    <text evidence="1">Belongs to the COX15/CtaA family. Type 2 subfamily.</text>
</comment>
<proteinExistence type="inferred from homology"/>